<organism>
    <name type="scientific">Escherichia coli O6:K15:H31 (strain 536 / UPEC)</name>
    <dbReference type="NCBI Taxonomy" id="362663"/>
    <lineage>
        <taxon>Bacteria</taxon>
        <taxon>Pseudomonadati</taxon>
        <taxon>Pseudomonadota</taxon>
        <taxon>Gammaproteobacteria</taxon>
        <taxon>Enterobacterales</taxon>
        <taxon>Enterobacteriaceae</taxon>
        <taxon>Escherichia</taxon>
    </lineage>
</organism>
<sequence length="616" mass="65652">MALLQISEPGLSAAPHQRRLAAGIDLGTTNSLVATVRSGQAETLADHEGRHLLPSVVHYQQQGHSVGYDARTNAALDTANTISSVKRLMGRSLADIQQRYPHLPYQFQASENGLPMIETAAGLLNPVRVSADILKALAARATEALAGELDGVVITVPAYFDDAQRQGTKDAARLAGLHVLRLLNEPTAAAIAYGLDSGQEGVIAVYDLGGGTFDISILRLSRGVFEVLATGGDSALGGDDFDHLLADYIREQAGIPDRSDNRVQRELLDAAIAAKIALSDADSVTVNVAGWQGEISREQFNELIAPLVKRTLLACRRALKDAGVEADEVLEVVMVGGSTRVPLVRERVGEFFGRPPLTSIDPDKVVAIGAAIQADILVGNKPDSEMLLLDVIPLSLGLETMGGLVEKVIPRNTTIPVARAQDFTTFKDGQTAMSIHVMQGERELVQDCRSLARFALRGIPALPAGGAHIRVTFQVDADGLLSVTAMEKSTGVEASIQVKPSYGLTDSEIASMIKDSMSYAEQDVKARMLAEQKVEAARVLESLHGALAADAALLSAAERQVIDDAAAHLSEVAQGDDVDAIEQAIKNVDKQTQDFAARRMDQSVRRALKGHSVDEV</sequence>
<gene>
    <name evidence="1" type="primary">hscA</name>
    <name type="ordered locus">ECP_2531</name>
</gene>
<name>HSCA_ECOL5</name>
<protein>
    <recommendedName>
        <fullName evidence="1">Chaperone protein HscA</fullName>
    </recommendedName>
    <alternativeName>
        <fullName evidence="1">Hsc66</fullName>
    </alternativeName>
</protein>
<reference key="1">
    <citation type="journal article" date="2006" name="Mol. Microbiol.">
        <title>Role of pathogenicity island-associated integrases in the genome plasticity of uropathogenic Escherichia coli strain 536.</title>
        <authorList>
            <person name="Hochhut B."/>
            <person name="Wilde C."/>
            <person name="Balling G."/>
            <person name="Middendorf B."/>
            <person name="Dobrindt U."/>
            <person name="Brzuszkiewicz E."/>
            <person name="Gottschalk G."/>
            <person name="Carniel E."/>
            <person name="Hacker J."/>
        </authorList>
    </citation>
    <scope>NUCLEOTIDE SEQUENCE [LARGE SCALE GENOMIC DNA]</scope>
    <source>
        <strain>536 / UPEC</strain>
    </source>
</reference>
<proteinExistence type="inferred from homology"/>
<feature type="chain" id="PRO_1000044856" description="Chaperone protein HscA">
    <location>
        <begin position="1"/>
        <end position="616"/>
    </location>
</feature>
<comment type="function">
    <text evidence="1">Chaperone involved in the maturation of iron-sulfur cluster-containing proteins. Has a low intrinsic ATPase activity which is markedly stimulated by HscB. Involved in the maturation of IscU.</text>
</comment>
<comment type="similarity">
    <text evidence="1">Belongs to the heat shock protein 70 family.</text>
</comment>
<keyword id="KW-0067">ATP-binding</keyword>
<keyword id="KW-0143">Chaperone</keyword>
<keyword id="KW-0547">Nucleotide-binding</keyword>
<dbReference type="EMBL" id="CP000247">
    <property type="protein sequence ID" value="ABG70520.1"/>
    <property type="molecule type" value="Genomic_DNA"/>
</dbReference>
<dbReference type="RefSeq" id="WP_001196613.1">
    <property type="nucleotide sequence ID" value="NC_008253.1"/>
</dbReference>
<dbReference type="SMR" id="Q0TEV9"/>
<dbReference type="GeneID" id="93774610"/>
<dbReference type="KEGG" id="ecp:ECP_2531"/>
<dbReference type="HOGENOM" id="CLU_005965_2_1_6"/>
<dbReference type="Proteomes" id="UP000009182">
    <property type="component" value="Chromosome"/>
</dbReference>
<dbReference type="GO" id="GO:0005524">
    <property type="term" value="F:ATP binding"/>
    <property type="evidence" value="ECO:0007669"/>
    <property type="project" value="UniProtKB-KW"/>
</dbReference>
<dbReference type="GO" id="GO:0016887">
    <property type="term" value="F:ATP hydrolysis activity"/>
    <property type="evidence" value="ECO:0007669"/>
    <property type="project" value="UniProtKB-UniRule"/>
</dbReference>
<dbReference type="GO" id="GO:0140662">
    <property type="term" value="F:ATP-dependent protein folding chaperone"/>
    <property type="evidence" value="ECO:0007669"/>
    <property type="project" value="InterPro"/>
</dbReference>
<dbReference type="GO" id="GO:0051082">
    <property type="term" value="F:unfolded protein binding"/>
    <property type="evidence" value="ECO:0007669"/>
    <property type="project" value="InterPro"/>
</dbReference>
<dbReference type="GO" id="GO:0016226">
    <property type="term" value="P:iron-sulfur cluster assembly"/>
    <property type="evidence" value="ECO:0007669"/>
    <property type="project" value="InterPro"/>
</dbReference>
<dbReference type="CDD" id="cd10236">
    <property type="entry name" value="ASKHA_NBD_HSP70_HscA"/>
    <property type="match status" value="1"/>
</dbReference>
<dbReference type="FunFam" id="1.20.1270.10:FF:000006">
    <property type="entry name" value="Chaperone protein HscA"/>
    <property type="match status" value="1"/>
</dbReference>
<dbReference type="FunFam" id="3.30.420.40:FF:000046">
    <property type="entry name" value="Chaperone protein HscA"/>
    <property type="match status" value="1"/>
</dbReference>
<dbReference type="FunFam" id="3.90.640.10:FF:000013">
    <property type="entry name" value="Chaperone protein HscA"/>
    <property type="match status" value="1"/>
</dbReference>
<dbReference type="FunFam" id="2.60.34.10:FF:000005">
    <property type="entry name" value="Chaperone protein HscA homolog"/>
    <property type="match status" value="1"/>
</dbReference>
<dbReference type="FunFam" id="3.30.420.40:FF:000020">
    <property type="entry name" value="Chaperone protein HscA homolog"/>
    <property type="match status" value="1"/>
</dbReference>
<dbReference type="Gene3D" id="1.20.1270.10">
    <property type="match status" value="1"/>
</dbReference>
<dbReference type="Gene3D" id="3.30.420.40">
    <property type="match status" value="2"/>
</dbReference>
<dbReference type="Gene3D" id="3.90.640.10">
    <property type="entry name" value="Actin, Chain A, domain 4"/>
    <property type="match status" value="1"/>
</dbReference>
<dbReference type="Gene3D" id="2.60.34.10">
    <property type="entry name" value="Substrate Binding Domain Of DNAk, Chain A, domain 1"/>
    <property type="match status" value="1"/>
</dbReference>
<dbReference type="HAMAP" id="MF_00679">
    <property type="entry name" value="HscA"/>
    <property type="match status" value="1"/>
</dbReference>
<dbReference type="InterPro" id="IPR043129">
    <property type="entry name" value="ATPase_NBD"/>
</dbReference>
<dbReference type="InterPro" id="IPR018181">
    <property type="entry name" value="Heat_shock_70_CS"/>
</dbReference>
<dbReference type="InterPro" id="IPR042039">
    <property type="entry name" value="HscA_NBD"/>
</dbReference>
<dbReference type="InterPro" id="IPR029048">
    <property type="entry name" value="HSP70_C_sf"/>
</dbReference>
<dbReference type="InterPro" id="IPR029047">
    <property type="entry name" value="HSP70_peptide-bd_sf"/>
</dbReference>
<dbReference type="InterPro" id="IPR013126">
    <property type="entry name" value="Hsp_70_fam"/>
</dbReference>
<dbReference type="InterPro" id="IPR010236">
    <property type="entry name" value="ISC_FeS_clus_asmbl_HscA"/>
</dbReference>
<dbReference type="NCBIfam" id="TIGR01991">
    <property type="entry name" value="HscA"/>
    <property type="match status" value="1"/>
</dbReference>
<dbReference type="NCBIfam" id="NF003520">
    <property type="entry name" value="PRK05183.1"/>
    <property type="match status" value="1"/>
</dbReference>
<dbReference type="PANTHER" id="PTHR19375">
    <property type="entry name" value="HEAT SHOCK PROTEIN 70KDA"/>
    <property type="match status" value="1"/>
</dbReference>
<dbReference type="Pfam" id="PF00012">
    <property type="entry name" value="HSP70"/>
    <property type="match status" value="1"/>
</dbReference>
<dbReference type="PRINTS" id="PR00301">
    <property type="entry name" value="HEATSHOCK70"/>
</dbReference>
<dbReference type="SUPFAM" id="SSF53067">
    <property type="entry name" value="Actin-like ATPase domain"/>
    <property type="match status" value="2"/>
</dbReference>
<dbReference type="SUPFAM" id="SSF100934">
    <property type="entry name" value="Heat shock protein 70kD (HSP70), C-terminal subdomain"/>
    <property type="match status" value="1"/>
</dbReference>
<dbReference type="SUPFAM" id="SSF100920">
    <property type="entry name" value="Heat shock protein 70kD (HSP70), peptide-binding domain"/>
    <property type="match status" value="1"/>
</dbReference>
<dbReference type="PROSITE" id="PS00297">
    <property type="entry name" value="HSP70_1"/>
    <property type="match status" value="1"/>
</dbReference>
<dbReference type="PROSITE" id="PS00329">
    <property type="entry name" value="HSP70_2"/>
    <property type="match status" value="1"/>
</dbReference>
<dbReference type="PROSITE" id="PS01036">
    <property type="entry name" value="HSP70_3"/>
    <property type="match status" value="1"/>
</dbReference>
<evidence type="ECO:0000255" key="1">
    <source>
        <dbReference type="HAMAP-Rule" id="MF_00679"/>
    </source>
</evidence>
<accession>Q0TEV9</accession>